<protein>
    <recommendedName>
        <fullName>Uncharacterized 10.2 kDa protein in e-segB intergenic region</fullName>
    </recommendedName>
</protein>
<feature type="chain" id="PRO_0000165150" description="Uncharacterized 10.2 kDa protein in e-segB intergenic region">
    <location>
        <begin position="1"/>
        <end position="87"/>
    </location>
</feature>
<gene>
    <name type="primary">y07A</name>
    <name type="synonym">e.8</name>
    <name type="synonym">msp1</name>
</gene>
<name>Y07A_BPT4</name>
<sequence>MDNYGELFNFFMKCVSEDFGRTVNDIKVIGPDHPMFETYAVMGNEDGQWYTVKVVINMFTAESYVKLSSKVYHDNDEIAEEYFNNMK</sequence>
<organism>
    <name type="scientific">Enterobacteria phage T4</name>
    <name type="common">Bacteriophage T4</name>
    <dbReference type="NCBI Taxonomy" id="10665"/>
    <lineage>
        <taxon>Viruses</taxon>
        <taxon>Duplodnaviria</taxon>
        <taxon>Heunggongvirae</taxon>
        <taxon>Uroviricota</taxon>
        <taxon>Caudoviricetes</taxon>
        <taxon>Straboviridae</taxon>
        <taxon>Tevenvirinae</taxon>
        <taxon>Tequatrovirus</taxon>
    </lineage>
</organism>
<proteinExistence type="predicted"/>
<keyword id="KW-1185">Reference proteome</keyword>
<accession>P39226</accession>
<reference key="1">
    <citation type="submission" date="1994-08" db="EMBL/GenBank/DDBJ databases">
        <title>Analysis of the region between lysozyme and the tRNA genes of bacteriophage T4.</title>
        <authorList>
            <person name="Anderson B."/>
            <person name="Zurabishvili T."/>
            <person name="Marusich E."/>
            <person name="Schneider M."/>
            <person name="Mullins T."/>
            <person name="Napuli A."/>
            <person name="Mesyanzhinov V.V."/>
            <person name="Neitzel J."/>
            <person name="Kutter E."/>
        </authorList>
    </citation>
    <scope>NUCLEOTIDE SEQUENCE [GENOMIC DNA]</scope>
    <source>
        <strain>D</strain>
    </source>
</reference>
<reference key="2">
    <citation type="journal article" date="2003" name="Microbiol. Mol. Biol. Rev.">
        <title>Bacteriophage T4 genome.</title>
        <authorList>
            <person name="Miller E.S."/>
            <person name="Kutter E."/>
            <person name="Mosig G."/>
            <person name="Arisaka F."/>
            <person name="Kunisawa T."/>
            <person name="Ruger W."/>
        </authorList>
    </citation>
    <scope>NUCLEOTIDE SEQUENCE [LARGE SCALE GENOMIC DNA]</scope>
</reference>
<dbReference type="EMBL" id="L13089">
    <property type="protein sequence ID" value="AAB59286.1"/>
    <property type="molecule type" value="Genomic_DNA"/>
</dbReference>
<dbReference type="EMBL" id="AF158101">
    <property type="protein sequence ID" value="AAD42576.1"/>
    <property type="molecule type" value="Genomic_DNA"/>
</dbReference>
<dbReference type="RefSeq" id="NP_049744.1">
    <property type="nucleotide sequence ID" value="NC_000866.4"/>
</dbReference>
<dbReference type="GeneID" id="1258598"/>
<dbReference type="KEGG" id="vg:1258598"/>
<dbReference type="OrthoDB" id="17983at10239"/>
<dbReference type="Proteomes" id="UP000009087">
    <property type="component" value="Segment"/>
</dbReference>
<organismHost>
    <name type="scientific">Escherichia coli</name>
    <dbReference type="NCBI Taxonomy" id="562"/>
</organismHost>